<name>SECB_BEII9</name>
<evidence type="ECO:0000255" key="1">
    <source>
        <dbReference type="HAMAP-Rule" id="MF_00821"/>
    </source>
</evidence>
<sequence>MADGNGTQETQDQAPAINAMVQYTKDFSFENPNAPRSLGPQEKAPNIAIQVHVNAQQLAESDFEVNIVLEGSAGEGANTLFKFELDYAGMFRLLNISPNDMHPVVMIECPRLLFPFARQIIADAVRSGGFPPLYIDPIDFAALYRKRLDEVAASAPQLKS</sequence>
<feature type="chain" id="PRO_1000134362" description="Protein-export protein SecB">
    <location>
        <begin position="1"/>
        <end position="160"/>
    </location>
</feature>
<accession>B2ICZ5</accession>
<keyword id="KW-0143">Chaperone</keyword>
<keyword id="KW-0963">Cytoplasm</keyword>
<keyword id="KW-0653">Protein transport</keyword>
<keyword id="KW-1185">Reference proteome</keyword>
<keyword id="KW-0811">Translocation</keyword>
<keyword id="KW-0813">Transport</keyword>
<protein>
    <recommendedName>
        <fullName evidence="1">Protein-export protein SecB</fullName>
    </recommendedName>
</protein>
<organism>
    <name type="scientific">Beijerinckia indica subsp. indica (strain ATCC 9039 / DSM 1715 / NCIMB 8712)</name>
    <dbReference type="NCBI Taxonomy" id="395963"/>
    <lineage>
        <taxon>Bacteria</taxon>
        <taxon>Pseudomonadati</taxon>
        <taxon>Pseudomonadota</taxon>
        <taxon>Alphaproteobacteria</taxon>
        <taxon>Hyphomicrobiales</taxon>
        <taxon>Beijerinckiaceae</taxon>
        <taxon>Beijerinckia</taxon>
    </lineage>
</organism>
<reference key="1">
    <citation type="journal article" date="2010" name="J. Bacteriol.">
        <title>Complete genome sequence of Beijerinckia indica subsp. indica.</title>
        <authorList>
            <person name="Tamas I."/>
            <person name="Dedysh S.N."/>
            <person name="Liesack W."/>
            <person name="Stott M.B."/>
            <person name="Alam M."/>
            <person name="Murrell J.C."/>
            <person name="Dunfield P.F."/>
        </authorList>
    </citation>
    <scope>NUCLEOTIDE SEQUENCE [LARGE SCALE GENOMIC DNA]</scope>
    <source>
        <strain>ATCC 9039 / DSM 1715 / NCIMB 8712</strain>
    </source>
</reference>
<dbReference type="EMBL" id="CP001016">
    <property type="protein sequence ID" value="ACB96760.1"/>
    <property type="molecule type" value="Genomic_DNA"/>
</dbReference>
<dbReference type="RefSeq" id="WP_012386108.1">
    <property type="nucleotide sequence ID" value="NC_010581.1"/>
</dbReference>
<dbReference type="SMR" id="B2ICZ5"/>
<dbReference type="STRING" id="395963.Bind_3200"/>
<dbReference type="KEGG" id="bid:Bind_3200"/>
<dbReference type="eggNOG" id="COG1952">
    <property type="taxonomic scope" value="Bacteria"/>
</dbReference>
<dbReference type="HOGENOM" id="CLU_111574_0_0_5"/>
<dbReference type="OrthoDB" id="9795145at2"/>
<dbReference type="Proteomes" id="UP000001695">
    <property type="component" value="Chromosome"/>
</dbReference>
<dbReference type="GO" id="GO:0005737">
    <property type="term" value="C:cytoplasm"/>
    <property type="evidence" value="ECO:0007669"/>
    <property type="project" value="UniProtKB-SubCell"/>
</dbReference>
<dbReference type="GO" id="GO:0051082">
    <property type="term" value="F:unfolded protein binding"/>
    <property type="evidence" value="ECO:0007669"/>
    <property type="project" value="InterPro"/>
</dbReference>
<dbReference type="GO" id="GO:0006457">
    <property type="term" value="P:protein folding"/>
    <property type="evidence" value="ECO:0007669"/>
    <property type="project" value="UniProtKB-UniRule"/>
</dbReference>
<dbReference type="GO" id="GO:0051262">
    <property type="term" value="P:protein tetramerization"/>
    <property type="evidence" value="ECO:0007669"/>
    <property type="project" value="InterPro"/>
</dbReference>
<dbReference type="GO" id="GO:0015031">
    <property type="term" value="P:protein transport"/>
    <property type="evidence" value="ECO:0007669"/>
    <property type="project" value="UniProtKB-UniRule"/>
</dbReference>
<dbReference type="Gene3D" id="3.10.420.10">
    <property type="entry name" value="SecB-like"/>
    <property type="match status" value="1"/>
</dbReference>
<dbReference type="HAMAP" id="MF_00821">
    <property type="entry name" value="SecB"/>
    <property type="match status" value="1"/>
</dbReference>
<dbReference type="InterPro" id="IPR003708">
    <property type="entry name" value="SecB"/>
</dbReference>
<dbReference type="InterPro" id="IPR035958">
    <property type="entry name" value="SecB-like_sf"/>
</dbReference>
<dbReference type="NCBIfam" id="NF004392">
    <property type="entry name" value="PRK05751.1-3"/>
    <property type="match status" value="1"/>
</dbReference>
<dbReference type="NCBIfam" id="TIGR00809">
    <property type="entry name" value="secB"/>
    <property type="match status" value="1"/>
</dbReference>
<dbReference type="PANTHER" id="PTHR36918">
    <property type="match status" value="1"/>
</dbReference>
<dbReference type="PANTHER" id="PTHR36918:SF1">
    <property type="entry name" value="PROTEIN-EXPORT PROTEIN SECB"/>
    <property type="match status" value="1"/>
</dbReference>
<dbReference type="Pfam" id="PF02556">
    <property type="entry name" value="SecB"/>
    <property type="match status" value="1"/>
</dbReference>
<dbReference type="PRINTS" id="PR01594">
    <property type="entry name" value="SECBCHAPRONE"/>
</dbReference>
<dbReference type="SUPFAM" id="SSF54611">
    <property type="entry name" value="SecB-like"/>
    <property type="match status" value="1"/>
</dbReference>
<proteinExistence type="inferred from homology"/>
<gene>
    <name evidence="1" type="primary">secB</name>
    <name type="ordered locus">Bind_3200</name>
</gene>
<comment type="function">
    <text evidence="1">One of the proteins required for the normal export of preproteins out of the cell cytoplasm. It is a molecular chaperone that binds to a subset of precursor proteins, maintaining them in a translocation-competent state. It also specifically binds to its receptor SecA.</text>
</comment>
<comment type="subunit">
    <text evidence="1">Homotetramer, a dimer of dimers. One homotetramer interacts with 1 SecA dimer.</text>
</comment>
<comment type="subcellular location">
    <subcellularLocation>
        <location evidence="1">Cytoplasm</location>
    </subcellularLocation>
</comment>
<comment type="similarity">
    <text evidence="1">Belongs to the SecB family.</text>
</comment>